<evidence type="ECO:0000255" key="1">
    <source>
        <dbReference type="HAMAP-Rule" id="MF_00366"/>
    </source>
</evidence>
<comment type="function">
    <text evidence="1">Promotes RNA polymerase assembly. Latches the N- and C-terminal regions of the beta' subunit thereby facilitating its interaction with the beta and alpha subunits.</text>
</comment>
<comment type="catalytic activity">
    <reaction evidence="1">
        <text>RNA(n) + a ribonucleoside 5'-triphosphate = RNA(n+1) + diphosphate</text>
        <dbReference type="Rhea" id="RHEA:21248"/>
        <dbReference type="Rhea" id="RHEA-COMP:14527"/>
        <dbReference type="Rhea" id="RHEA-COMP:17342"/>
        <dbReference type="ChEBI" id="CHEBI:33019"/>
        <dbReference type="ChEBI" id="CHEBI:61557"/>
        <dbReference type="ChEBI" id="CHEBI:140395"/>
        <dbReference type="EC" id="2.7.7.6"/>
    </reaction>
</comment>
<comment type="subunit">
    <text evidence="1">The RNAP catalytic core consists of 2 alpha, 1 beta, 1 beta' and 1 omega subunit. When a sigma factor is associated with the core the holoenzyme is formed, which can initiate transcription.</text>
</comment>
<comment type="similarity">
    <text evidence="1">Belongs to the RNA polymerase subunit omega family.</text>
</comment>
<accession>A6TFP8</accession>
<proteinExistence type="inferred from homology"/>
<organism>
    <name type="scientific">Klebsiella pneumoniae subsp. pneumoniae (strain ATCC 700721 / MGH 78578)</name>
    <dbReference type="NCBI Taxonomy" id="272620"/>
    <lineage>
        <taxon>Bacteria</taxon>
        <taxon>Pseudomonadati</taxon>
        <taxon>Pseudomonadota</taxon>
        <taxon>Gammaproteobacteria</taxon>
        <taxon>Enterobacterales</taxon>
        <taxon>Enterobacteriaceae</taxon>
        <taxon>Klebsiella/Raoultella group</taxon>
        <taxon>Klebsiella</taxon>
        <taxon>Klebsiella pneumoniae complex</taxon>
    </lineage>
</organism>
<dbReference type="EC" id="2.7.7.6" evidence="1"/>
<dbReference type="EMBL" id="CP000647">
    <property type="protein sequence ID" value="ABR79382.1"/>
    <property type="molecule type" value="Genomic_DNA"/>
</dbReference>
<dbReference type="RefSeq" id="WP_000135058.1">
    <property type="nucleotide sequence ID" value="NC_009648.1"/>
</dbReference>
<dbReference type="SMR" id="A6TFP8"/>
<dbReference type="STRING" id="272620.KPN_03997"/>
<dbReference type="jPOST" id="A6TFP8"/>
<dbReference type="PaxDb" id="272620-KPN_03997"/>
<dbReference type="EnsemblBacteria" id="ABR79382">
    <property type="protein sequence ID" value="ABR79382"/>
    <property type="gene ID" value="KPN_03997"/>
</dbReference>
<dbReference type="GeneID" id="98390719"/>
<dbReference type="KEGG" id="kpn:KPN_03997"/>
<dbReference type="HOGENOM" id="CLU_125406_5_3_6"/>
<dbReference type="Proteomes" id="UP000000265">
    <property type="component" value="Chromosome"/>
</dbReference>
<dbReference type="GO" id="GO:0000428">
    <property type="term" value="C:DNA-directed RNA polymerase complex"/>
    <property type="evidence" value="ECO:0007669"/>
    <property type="project" value="UniProtKB-KW"/>
</dbReference>
<dbReference type="GO" id="GO:0003677">
    <property type="term" value="F:DNA binding"/>
    <property type="evidence" value="ECO:0007669"/>
    <property type="project" value="UniProtKB-UniRule"/>
</dbReference>
<dbReference type="GO" id="GO:0003899">
    <property type="term" value="F:DNA-directed RNA polymerase activity"/>
    <property type="evidence" value="ECO:0007669"/>
    <property type="project" value="UniProtKB-UniRule"/>
</dbReference>
<dbReference type="GO" id="GO:0006351">
    <property type="term" value="P:DNA-templated transcription"/>
    <property type="evidence" value="ECO:0007669"/>
    <property type="project" value="UniProtKB-UniRule"/>
</dbReference>
<dbReference type="FunFam" id="3.90.940.10:FF:000001">
    <property type="entry name" value="DNA-directed RNA polymerase subunit omega"/>
    <property type="match status" value="1"/>
</dbReference>
<dbReference type="Gene3D" id="3.90.940.10">
    <property type="match status" value="1"/>
</dbReference>
<dbReference type="HAMAP" id="MF_00366">
    <property type="entry name" value="RNApol_bact_RpoZ"/>
    <property type="match status" value="1"/>
</dbReference>
<dbReference type="InterPro" id="IPR003716">
    <property type="entry name" value="DNA-dir_RNA_pol_omega"/>
</dbReference>
<dbReference type="InterPro" id="IPR006110">
    <property type="entry name" value="Pol_omega/Rpo6/RPB6"/>
</dbReference>
<dbReference type="InterPro" id="IPR036161">
    <property type="entry name" value="RPB6/omega-like_sf"/>
</dbReference>
<dbReference type="NCBIfam" id="TIGR00690">
    <property type="entry name" value="rpoZ"/>
    <property type="match status" value="1"/>
</dbReference>
<dbReference type="PANTHER" id="PTHR34476">
    <property type="entry name" value="DNA-DIRECTED RNA POLYMERASE SUBUNIT OMEGA"/>
    <property type="match status" value="1"/>
</dbReference>
<dbReference type="PANTHER" id="PTHR34476:SF1">
    <property type="entry name" value="DNA-DIRECTED RNA POLYMERASE SUBUNIT OMEGA"/>
    <property type="match status" value="1"/>
</dbReference>
<dbReference type="Pfam" id="PF01192">
    <property type="entry name" value="RNA_pol_Rpb6"/>
    <property type="match status" value="1"/>
</dbReference>
<dbReference type="SMART" id="SM01409">
    <property type="entry name" value="RNA_pol_Rpb6"/>
    <property type="match status" value="1"/>
</dbReference>
<dbReference type="SUPFAM" id="SSF63562">
    <property type="entry name" value="RPB6/omega subunit-like"/>
    <property type="match status" value="1"/>
</dbReference>
<sequence>MARVTVQDAVEKIGNRFDLVLVAARRARQMQVGGKDPLVPEENDKTTVIALREIEEGLINNQILDVRERQEQQEQEAAELQAVTAIAEGRR</sequence>
<reference key="1">
    <citation type="submission" date="2006-09" db="EMBL/GenBank/DDBJ databases">
        <authorList>
            <consortium name="The Klebsiella pneumonia Genome Sequencing Project"/>
            <person name="McClelland M."/>
            <person name="Sanderson E.K."/>
            <person name="Spieth J."/>
            <person name="Clifton W.S."/>
            <person name="Latreille P."/>
            <person name="Sabo A."/>
            <person name="Pepin K."/>
            <person name="Bhonagiri V."/>
            <person name="Porwollik S."/>
            <person name="Ali J."/>
            <person name="Wilson R.K."/>
        </authorList>
    </citation>
    <scope>NUCLEOTIDE SEQUENCE [LARGE SCALE GENOMIC DNA]</scope>
    <source>
        <strain>ATCC 700721 / MGH 78578</strain>
    </source>
</reference>
<name>RPOZ_KLEP7</name>
<protein>
    <recommendedName>
        <fullName evidence="1">DNA-directed RNA polymerase subunit omega</fullName>
        <shortName evidence="1">RNAP omega subunit</shortName>
        <ecNumber evidence="1">2.7.7.6</ecNumber>
    </recommendedName>
    <alternativeName>
        <fullName evidence="1">RNA polymerase omega subunit</fullName>
    </alternativeName>
    <alternativeName>
        <fullName evidence="1">Transcriptase subunit omega</fullName>
    </alternativeName>
</protein>
<gene>
    <name evidence="1" type="primary">rpoZ</name>
    <name type="ordered locus">KPN78578_39580</name>
    <name type="ORF">KPN_03997</name>
</gene>
<feature type="chain" id="PRO_1000005944" description="DNA-directed RNA polymerase subunit omega">
    <location>
        <begin position="1"/>
        <end position="91"/>
    </location>
</feature>
<keyword id="KW-0240">DNA-directed RNA polymerase</keyword>
<keyword id="KW-0548">Nucleotidyltransferase</keyword>
<keyword id="KW-0804">Transcription</keyword>
<keyword id="KW-0808">Transferase</keyword>